<name>AMPH_ECOLI</name>
<proteinExistence type="evidence at protein level"/>
<accession>P0AD70</accession>
<accession>P46127</accession>
<accession>P75701</accession>
<accession>Q2MC49</accession>
<feature type="signal peptide" evidence="1">
    <location>
        <begin position="1"/>
        <end position="21"/>
    </location>
</feature>
<feature type="chain" id="PRO_0000195474" description="D-alanyl-D-alanine-carboxypeptidase/endopeptidase AmpH">
    <location>
        <begin position="22"/>
        <end position="385"/>
    </location>
</feature>
<keyword id="KW-0121">Carboxypeptidase</keyword>
<keyword id="KW-0997">Cell inner membrane</keyword>
<keyword id="KW-1003">Cell membrane</keyword>
<keyword id="KW-0133">Cell shape</keyword>
<keyword id="KW-0961">Cell wall biogenesis/degradation</keyword>
<keyword id="KW-0903">Direct protein sequencing</keyword>
<keyword id="KW-0378">Hydrolase</keyword>
<keyword id="KW-0472">Membrane</keyword>
<keyword id="KW-0645">Protease</keyword>
<keyword id="KW-1185">Reference proteome</keyword>
<keyword id="KW-0732">Signal</keyword>
<evidence type="ECO:0000269" key="1">
    <source>
    </source>
</evidence>
<evidence type="ECO:0000269" key="2">
    <source>
    </source>
</evidence>
<evidence type="ECO:0000305" key="3"/>
<sequence length="385" mass="41849">MKRSLLFSAVLCAASLTSVHAAQPITEPEFASDIVDRYADHIFYGSGATGMALVVIDGNQRVFRSYGETRPGNNVRPQLDSVVRIASLTKLMTSEMLVKLLDQGTVKLNDPLSKYAPPGARVPTYNGTPITLVNLATHTSALPREQPGGAAHRPVFVWPTREQRWKYLSTAKLKAAPGSQAAYSNLAFDLLADALANASGKPYTQLFEEQITRPLGMKDTTYTPSPDQCRRLMVAERGASPCNNTLAAIGSGGVYSTPGDMMRWMQQYLSSDFYQRSNQADRMQTLIYQRAQFTKVIGMDVPGKADALGLGWVYMAPKEGRPGIIQKTGGGGGFITYMAMIPQKNIGAFVVVTRSPLTRFKNMSDGINDLVTELSGNKPLVIPAS</sequence>
<protein>
    <recommendedName>
        <fullName>D-alanyl-D-alanine-carboxypeptidase/endopeptidase AmpH</fullName>
        <ecNumber>3.4.-.-</ecNumber>
    </recommendedName>
    <alternativeName>
        <fullName>DD-alanine-endopeptidase</fullName>
    </alternativeName>
    <alternativeName>
        <fullName>DD-carboxypeptidase</fullName>
    </alternativeName>
    <alternativeName>
        <fullName>Penicillin-binding protein AmpH</fullName>
    </alternativeName>
</protein>
<dbReference type="EC" id="3.4.-.-"/>
<dbReference type="EMBL" id="U73857">
    <property type="protein sequence ID" value="AAB18099.1"/>
    <property type="status" value="ALT_INIT"/>
    <property type="molecule type" value="Genomic_DNA"/>
</dbReference>
<dbReference type="EMBL" id="U00096">
    <property type="protein sequence ID" value="AAC73479.1"/>
    <property type="molecule type" value="Genomic_DNA"/>
</dbReference>
<dbReference type="EMBL" id="AP009048">
    <property type="protein sequence ID" value="BAE76157.1"/>
    <property type="molecule type" value="Genomic_DNA"/>
</dbReference>
<dbReference type="EMBL" id="X54153">
    <property type="status" value="NOT_ANNOTATED_CDS"/>
    <property type="molecule type" value="Genomic_DNA"/>
</dbReference>
<dbReference type="PIR" id="H64765">
    <property type="entry name" value="H64765"/>
</dbReference>
<dbReference type="RefSeq" id="NP_414910.1">
    <property type="nucleotide sequence ID" value="NC_000913.3"/>
</dbReference>
<dbReference type="RefSeq" id="WP_000830741.1">
    <property type="nucleotide sequence ID" value="NZ_SSZK01000009.1"/>
</dbReference>
<dbReference type="SMR" id="P0AD70"/>
<dbReference type="BioGRID" id="4259482">
    <property type="interactions" value="259"/>
</dbReference>
<dbReference type="BioGRID" id="851243">
    <property type="interactions" value="1"/>
</dbReference>
<dbReference type="DIP" id="DIP-47910N"/>
<dbReference type="FunCoup" id="P0AD70">
    <property type="interactions" value="158"/>
</dbReference>
<dbReference type="IntAct" id="P0AD70">
    <property type="interactions" value="1"/>
</dbReference>
<dbReference type="STRING" id="511145.b0376"/>
<dbReference type="MEROPS" id="S12.012"/>
<dbReference type="jPOST" id="P0AD70"/>
<dbReference type="PaxDb" id="511145-b0376"/>
<dbReference type="EnsemblBacteria" id="AAC73479">
    <property type="protein sequence ID" value="AAC73479"/>
    <property type="gene ID" value="b0376"/>
</dbReference>
<dbReference type="GeneID" id="93777086"/>
<dbReference type="GeneID" id="946904"/>
<dbReference type="KEGG" id="ecj:JW5052"/>
<dbReference type="KEGG" id="eco:b0376"/>
<dbReference type="PATRIC" id="fig|1411691.4.peg.1903"/>
<dbReference type="EchoBASE" id="EB2708"/>
<dbReference type="eggNOG" id="COG1680">
    <property type="taxonomic scope" value="Bacteria"/>
</dbReference>
<dbReference type="HOGENOM" id="CLU_020027_7_1_6"/>
<dbReference type="InParanoid" id="P0AD70"/>
<dbReference type="OMA" id="NDTILWT"/>
<dbReference type="OrthoDB" id="119951at2"/>
<dbReference type="PhylomeDB" id="P0AD70"/>
<dbReference type="BioCyc" id="EcoCyc:EG12867-MONOMER"/>
<dbReference type="BioCyc" id="MetaCyc:EG12867-MONOMER"/>
<dbReference type="SABIO-RK" id="P0AD70"/>
<dbReference type="PRO" id="PR:P0AD70"/>
<dbReference type="Proteomes" id="UP000000625">
    <property type="component" value="Chromosome"/>
</dbReference>
<dbReference type="GO" id="GO:0005886">
    <property type="term" value="C:plasma membrane"/>
    <property type="evidence" value="ECO:0007669"/>
    <property type="project" value="UniProtKB-SubCell"/>
</dbReference>
<dbReference type="GO" id="GO:0004180">
    <property type="term" value="F:carboxypeptidase activity"/>
    <property type="evidence" value="ECO:0000314"/>
    <property type="project" value="UniProtKB"/>
</dbReference>
<dbReference type="GO" id="GO:0004175">
    <property type="term" value="F:endopeptidase activity"/>
    <property type="evidence" value="ECO:0000314"/>
    <property type="project" value="UniProtKB"/>
</dbReference>
<dbReference type="GO" id="GO:0008658">
    <property type="term" value="F:penicillin binding"/>
    <property type="evidence" value="ECO:0000314"/>
    <property type="project" value="EcoCyc"/>
</dbReference>
<dbReference type="GO" id="GO:0071555">
    <property type="term" value="P:cell wall organization"/>
    <property type="evidence" value="ECO:0007669"/>
    <property type="project" value="UniProtKB-KW"/>
</dbReference>
<dbReference type="GO" id="GO:0009253">
    <property type="term" value="P:peptidoglycan catabolic process"/>
    <property type="evidence" value="ECO:0000315"/>
    <property type="project" value="UniProtKB"/>
</dbReference>
<dbReference type="GO" id="GO:0006508">
    <property type="term" value="P:proteolysis"/>
    <property type="evidence" value="ECO:0007669"/>
    <property type="project" value="UniProtKB-KW"/>
</dbReference>
<dbReference type="GO" id="GO:0008360">
    <property type="term" value="P:regulation of cell shape"/>
    <property type="evidence" value="ECO:0000315"/>
    <property type="project" value="UniProtKB"/>
</dbReference>
<dbReference type="FunFam" id="3.40.710.10:FF:000011">
    <property type="entry name" value="Penicillin-binding protein AmpH"/>
    <property type="match status" value="1"/>
</dbReference>
<dbReference type="Gene3D" id="3.40.710.10">
    <property type="entry name" value="DD-peptidase/beta-lactamase superfamily"/>
    <property type="match status" value="1"/>
</dbReference>
<dbReference type="InterPro" id="IPR001466">
    <property type="entry name" value="Beta-lactam-related"/>
</dbReference>
<dbReference type="InterPro" id="IPR012338">
    <property type="entry name" value="Beta-lactam/transpept-like"/>
</dbReference>
<dbReference type="InterPro" id="IPR051478">
    <property type="entry name" value="Beta-lactamase-like_AB/R"/>
</dbReference>
<dbReference type="NCBIfam" id="NF007943">
    <property type="entry name" value="PRK10662.1"/>
    <property type="match status" value="1"/>
</dbReference>
<dbReference type="PANTHER" id="PTHR22935:SF95">
    <property type="entry name" value="BETA-LACTAMASE-LIKE 1-RELATED"/>
    <property type="match status" value="1"/>
</dbReference>
<dbReference type="PANTHER" id="PTHR22935">
    <property type="entry name" value="PENICILLIN-BINDING PROTEIN"/>
    <property type="match status" value="1"/>
</dbReference>
<dbReference type="Pfam" id="PF00144">
    <property type="entry name" value="Beta-lactamase"/>
    <property type="match status" value="1"/>
</dbReference>
<dbReference type="SUPFAM" id="SSF56601">
    <property type="entry name" value="beta-lactamase/transpeptidase-like"/>
    <property type="match status" value="1"/>
</dbReference>
<reference key="1">
    <citation type="submission" date="1997-01" db="EMBL/GenBank/DDBJ databases">
        <title>Sequence of minutes 4-25 of Escherichia coli.</title>
        <authorList>
            <person name="Chung E."/>
            <person name="Allen E."/>
            <person name="Araujo R."/>
            <person name="Aparicio A.M."/>
            <person name="Davis K."/>
            <person name="Duncan M."/>
            <person name="Federspiel N."/>
            <person name="Hyman R."/>
            <person name="Kalman S."/>
            <person name="Komp C."/>
            <person name="Kurdi O."/>
            <person name="Lew H."/>
            <person name="Lin D."/>
            <person name="Namath A."/>
            <person name="Oefner P."/>
            <person name="Roberts D."/>
            <person name="Schramm S."/>
            <person name="Davis R.W."/>
        </authorList>
    </citation>
    <scope>NUCLEOTIDE SEQUENCE [LARGE SCALE GENOMIC DNA]</scope>
    <source>
        <strain>K12 / MG1655 / ATCC 47076</strain>
    </source>
</reference>
<reference key="2">
    <citation type="journal article" date="1997" name="Science">
        <title>The complete genome sequence of Escherichia coli K-12.</title>
        <authorList>
            <person name="Blattner F.R."/>
            <person name="Plunkett G. III"/>
            <person name="Bloch C.A."/>
            <person name="Perna N.T."/>
            <person name="Burland V."/>
            <person name="Riley M."/>
            <person name="Collado-Vides J."/>
            <person name="Glasner J.D."/>
            <person name="Rode C.K."/>
            <person name="Mayhew G.F."/>
            <person name="Gregor J."/>
            <person name="Davis N.W."/>
            <person name="Kirkpatrick H.A."/>
            <person name="Goeden M.A."/>
            <person name="Rose D.J."/>
            <person name="Mau B."/>
            <person name="Shao Y."/>
        </authorList>
    </citation>
    <scope>NUCLEOTIDE SEQUENCE [LARGE SCALE GENOMIC DNA]</scope>
    <source>
        <strain>K12 / MG1655 / ATCC 47076</strain>
    </source>
</reference>
<reference key="3">
    <citation type="journal article" date="2006" name="Mol. Syst. Biol.">
        <title>Highly accurate genome sequences of Escherichia coli K-12 strains MG1655 and W3110.</title>
        <authorList>
            <person name="Hayashi K."/>
            <person name="Morooka N."/>
            <person name="Yamamoto Y."/>
            <person name="Fujita K."/>
            <person name="Isono K."/>
            <person name="Choi S."/>
            <person name="Ohtsubo E."/>
            <person name="Baba T."/>
            <person name="Wanner B.L."/>
            <person name="Mori H."/>
            <person name="Horiuchi T."/>
        </authorList>
    </citation>
    <scope>NUCLEOTIDE SEQUENCE [LARGE SCALE GENOMIC DNA]</scope>
    <source>
        <strain>K12 / W3110 / ATCC 27325 / DSM 5911</strain>
    </source>
</reference>
<reference key="4">
    <citation type="journal article" date="1991" name="J. Bacteriol.">
        <title>Nucleotide sequence of the Escherichia coli regulatory gene mprA and construction and characterization of mprA-deficient mutants.</title>
        <authorList>
            <person name="del Castillo I."/>
            <person name="Gonzalez-Pastor J.E."/>
            <person name="San Millan J.L."/>
            <person name="Moreno F."/>
        </authorList>
    </citation>
    <scope>NUCLEOTIDE SEQUENCE [GENOMIC DNA] OF 1-78</scope>
    <source>
        <strain>K12</strain>
    </source>
</reference>
<reference key="5">
    <citation type="journal article" date="1995" name="Nucleic Acids Res.">
        <title>Detection of new genes in a bacterial genome using Markov models for three gene classes.</title>
        <authorList>
            <person name="Borodovsky M."/>
            <person name="McIninch J."/>
            <person name="Koonin E.V."/>
            <person name="Rudd K.E."/>
            <person name="Medigue C."/>
            <person name="Danchin A."/>
        </authorList>
    </citation>
    <scope>IDENTIFICATION</scope>
</reference>
<reference key="6">
    <citation type="journal article" date="1997" name="J. Bacteriol.">
        <title>AmpC and AmpH, proteins related to the class C beta-lactamases, bind penicillin and contribute to the normal morphology of Escherichia coli.</title>
        <authorList>
            <person name="Henderson T.A."/>
            <person name="Young K.D."/>
            <person name="Denome S.A."/>
            <person name="Elf P.K."/>
        </authorList>
    </citation>
    <scope>DISRUPTION PHENOTYPE</scope>
    <scope>NOMENCLATURE</scope>
</reference>
<reference key="7">
    <citation type="journal article" date="2011" name="J. Bacteriol.">
        <title>AmpH, a bifunctional DD-endopeptidase and DD-carboxypeptidase of Escherichia coli.</title>
        <authorList>
            <person name="Gonzalez-Leiza S.M."/>
            <person name="de Pedro M.A."/>
            <person name="Ayala J.A."/>
        </authorList>
    </citation>
    <scope>PROTEIN SEQUENCE OF N-TERMINUS</scope>
    <scope>FUNCTION AS A CARBOXYPEPTIDASE AND ENDOPEPTIDASE</scope>
    <scope>MASS SPECTROMETRY</scope>
    <scope>ACTIVITY REGULATION</scope>
    <scope>BIOPHYSICOCHEMICAL PROPERTIES</scope>
    <scope>SUBSTRATE SPECIFICITY</scope>
    <scope>SUBCELLULAR LOCATION</scope>
</reference>
<gene>
    <name type="primary">ampH</name>
    <name type="synonym">yaiH</name>
    <name type="ordered locus">b0376</name>
    <name type="ordered locus">JW5052</name>
</gene>
<organism>
    <name type="scientific">Escherichia coli (strain K12)</name>
    <dbReference type="NCBI Taxonomy" id="83333"/>
    <lineage>
        <taxon>Bacteria</taxon>
        <taxon>Pseudomonadati</taxon>
        <taxon>Pseudomonadota</taxon>
        <taxon>Gammaproteobacteria</taxon>
        <taxon>Enterobacterales</taxon>
        <taxon>Enterobacteriaceae</taxon>
        <taxon>Escherichia</taxon>
    </lineage>
</organism>
<comment type="function">
    <text evidence="1">Hydrolyzes the cross-linked dimers tetrapentapeptide (D45) and tetratetrapeptide (D44). Removes the terminal D-alanine from muropeptides and disaccharide pentapeptide M5 with a C-terminal D-Ala-D-Ala dipeptide. Associated with recycling and remodeling of peptidoglycan (PG). Also displays a low beta-lactamase activity.</text>
</comment>
<comment type="activity regulation">
    <text evidence="1">Inhibited by cefmetazole.</text>
</comment>
<comment type="biophysicochemical properties">
    <kinetics>
        <KM evidence="1">102 uM for D45 (at 37 degrees Celsius and pH 7.3)</KM>
        <KM evidence="1">134 uM for D44 (at 37 degrees Celsius and pH 7.3)</KM>
        <KM evidence="1">225 uM for M5 (at 37 degrees Celsius and pH 7.5)</KM>
        <Vmax evidence="1">4.98 nmol/min/ug enzyme with M5 as substrate (at 37 degrees Celsius and pH 7.5)</Vmax>
        <Vmax evidence="1">162.0 nmol/min/ug enzyme with D44 as substrate (at 37 degrees Celsius and pH 7.3)</Vmax>
        <Vmax evidence="1">174.0 nmol/min/ug enzyme with D45 as substrate (at 37 degrees Celsius and pH 7.3)</Vmax>
    </kinetics>
</comment>
<comment type="subcellular location">
    <subcellularLocation>
        <location evidence="1">Cell inner membrane</location>
    </subcellularLocation>
</comment>
<comment type="mass spectrometry" mass="41860.0" method="MALDI" evidence="1"/>
<comment type="disruption phenotype">
    <text evidence="2">Disruption is viable and exhibits no overt growth defects, but produces morphologically aberrant cells, particularly in cell filaments induced by aztreonam.</text>
</comment>
<comment type="similarity">
    <text evidence="3">Belongs to the beta-lactamase family.</text>
</comment>
<comment type="sequence caution" evidence="3">
    <conflict type="erroneous initiation">
        <sequence resource="EMBL-CDS" id="AAB18099"/>
    </conflict>
    <text>Truncated N-terminus.</text>
</comment>